<gene>
    <name type="ordered locus">AF_0456</name>
</gene>
<proteinExistence type="inferred from homology"/>
<organism>
    <name type="scientific">Archaeoglobus fulgidus (strain ATCC 49558 / DSM 4304 / JCM 9628 / NBRC 100126 / VC-16)</name>
    <dbReference type="NCBI Taxonomy" id="224325"/>
    <lineage>
        <taxon>Archaea</taxon>
        <taxon>Methanobacteriati</taxon>
        <taxon>Methanobacteriota</taxon>
        <taxon>Archaeoglobi</taxon>
        <taxon>Archaeoglobales</taxon>
        <taxon>Archaeoglobaceae</taxon>
        <taxon>Archaeoglobus</taxon>
    </lineage>
</organism>
<sequence length="151" mass="16686">MEEAEKAKRRSIELLNETRNCAYSSFVALAEALNISLNEDMKNMAIGFAGGISGSGHICGALWGSIAAASLYTMKMMGDRRKIQNPLERYMPVYAKCAGIYRKFVELNGSPNCGDLNPNLDLVSVEQRRKCMEIVSRAVEITLSSLKDQKT</sequence>
<dbReference type="EMBL" id="AE000782">
    <property type="protein sequence ID" value="AAB90786.1"/>
    <property type="molecule type" value="Genomic_DNA"/>
</dbReference>
<dbReference type="PIR" id="H69306">
    <property type="entry name" value="H69306"/>
</dbReference>
<dbReference type="RefSeq" id="WP_010877963.1">
    <property type="nucleotide sequence ID" value="NC_000917.1"/>
</dbReference>
<dbReference type="SMR" id="O29793"/>
<dbReference type="STRING" id="224325.AF_0456"/>
<dbReference type="PaxDb" id="224325-AF_0456"/>
<dbReference type="EnsemblBacteria" id="AAB90786">
    <property type="protein sequence ID" value="AAB90786"/>
    <property type="gene ID" value="AF_0456"/>
</dbReference>
<dbReference type="KEGG" id="afu:AF_0456"/>
<dbReference type="eggNOG" id="arCOG06069">
    <property type="taxonomic scope" value="Archaea"/>
</dbReference>
<dbReference type="HOGENOM" id="CLU_1727137_0_0_2"/>
<dbReference type="Proteomes" id="UP000002199">
    <property type="component" value="Chromosome"/>
</dbReference>
<dbReference type="GO" id="GO:0016020">
    <property type="term" value="C:membrane"/>
    <property type="evidence" value="ECO:0007669"/>
    <property type="project" value="UniProtKB-SubCell"/>
</dbReference>
<dbReference type="InterPro" id="IPR010181">
    <property type="entry name" value="CGCAxxGCC_motif"/>
</dbReference>
<dbReference type="InterPro" id="IPR036280">
    <property type="entry name" value="Multihaem_cyt_sf"/>
</dbReference>
<dbReference type="NCBIfam" id="TIGR01909">
    <property type="entry name" value="C_GCAxxG_C_C"/>
    <property type="match status" value="1"/>
</dbReference>
<dbReference type="Pfam" id="PF09719">
    <property type="entry name" value="C_GCAxxG_C_C"/>
    <property type="match status" value="1"/>
</dbReference>
<dbReference type="SUPFAM" id="SSF48695">
    <property type="entry name" value="Multiheme cytochromes"/>
    <property type="match status" value="1"/>
</dbReference>
<reference key="1">
    <citation type="journal article" date="1997" name="Nature">
        <title>The complete genome sequence of the hyperthermophilic, sulphate-reducing archaeon Archaeoglobus fulgidus.</title>
        <authorList>
            <person name="Klenk H.-P."/>
            <person name="Clayton R.A."/>
            <person name="Tomb J.-F."/>
            <person name="White O."/>
            <person name="Nelson K.E."/>
            <person name="Ketchum K.A."/>
            <person name="Dodson R.J."/>
            <person name="Gwinn M.L."/>
            <person name="Hickey E.K."/>
            <person name="Peterson J.D."/>
            <person name="Richardson D.L."/>
            <person name="Kerlavage A.R."/>
            <person name="Graham D.E."/>
            <person name="Kyrpides N.C."/>
            <person name="Fleischmann R.D."/>
            <person name="Quackenbush J."/>
            <person name="Lee N.H."/>
            <person name="Sutton G.G."/>
            <person name="Gill S.R."/>
            <person name="Kirkness E.F."/>
            <person name="Dougherty B.A."/>
            <person name="McKenney K."/>
            <person name="Adams M.D."/>
            <person name="Loftus B.J."/>
            <person name="Peterson S.N."/>
            <person name="Reich C.I."/>
            <person name="McNeil L.K."/>
            <person name="Badger J.H."/>
            <person name="Glodek A."/>
            <person name="Zhou L."/>
            <person name="Overbeek R."/>
            <person name="Gocayne J.D."/>
            <person name="Weidman J.F."/>
            <person name="McDonald L.A."/>
            <person name="Utterback T.R."/>
            <person name="Cotton M.D."/>
            <person name="Spriggs T."/>
            <person name="Artiach P."/>
            <person name="Kaine B.P."/>
            <person name="Sykes S.M."/>
            <person name="Sadow P.W."/>
            <person name="D'Andrea K.P."/>
            <person name="Bowman C."/>
            <person name="Fujii C."/>
            <person name="Garland S.A."/>
            <person name="Mason T.M."/>
            <person name="Olsen G.J."/>
            <person name="Fraser C.M."/>
            <person name="Smith H.O."/>
            <person name="Woese C.R."/>
            <person name="Venter J.C."/>
        </authorList>
    </citation>
    <scope>NUCLEOTIDE SEQUENCE [LARGE SCALE GENOMIC DNA]</scope>
    <source>
        <strain>ATCC 49558 / DSM 4304 / JCM 9628 / NBRC 100126 / VC-16</strain>
    </source>
</reference>
<evidence type="ECO:0000255" key="1"/>
<evidence type="ECO:0000305" key="2"/>
<comment type="subcellular location">
    <subcellularLocation>
        <location evidence="2">Membrane</location>
        <topology evidence="2">Single-pass membrane protein</topology>
    </subcellularLocation>
</comment>
<accession>O29793</accession>
<feature type="signal peptide" evidence="1">
    <location>
        <begin position="1"/>
        <end position="32"/>
    </location>
</feature>
<feature type="chain" id="PRO_0000013640" description="Uncharacterized protein AF_0456">
    <location>
        <begin position="33"/>
        <end position="151"/>
    </location>
</feature>
<feature type="transmembrane region" description="Helical" evidence="1">
    <location>
        <begin position="45"/>
        <end position="67"/>
    </location>
</feature>
<keyword id="KW-0472">Membrane</keyword>
<keyword id="KW-1185">Reference proteome</keyword>
<keyword id="KW-0732">Signal</keyword>
<keyword id="KW-0812">Transmembrane</keyword>
<keyword id="KW-1133">Transmembrane helix</keyword>
<name>Y456_ARCFU</name>
<protein>
    <recommendedName>
        <fullName>Uncharacterized protein AF_0456</fullName>
    </recommendedName>
</protein>